<protein>
    <recommendedName>
        <fullName evidence="1">GMP synthase [glutamine-hydrolyzing]</fullName>
        <ecNumber evidence="1">6.3.5.2</ecNumber>
    </recommendedName>
    <alternativeName>
        <fullName evidence="1">GMP synthetase</fullName>
    </alternativeName>
    <alternativeName>
        <fullName evidence="1">Glutamine amidotransferase</fullName>
    </alternativeName>
</protein>
<keyword id="KW-0067">ATP-binding</keyword>
<keyword id="KW-0315">Glutamine amidotransferase</keyword>
<keyword id="KW-0332">GMP biosynthesis</keyword>
<keyword id="KW-0436">Ligase</keyword>
<keyword id="KW-0547">Nucleotide-binding</keyword>
<keyword id="KW-0658">Purine biosynthesis</keyword>
<keyword id="KW-1185">Reference proteome</keyword>
<reference key="1">
    <citation type="journal article" date="2003" name="Genome Res.">
        <title>Tropheryma whipplei twist: a human pathogenic Actinobacteria with a reduced genome.</title>
        <authorList>
            <person name="Raoult D."/>
            <person name="Ogata H."/>
            <person name="Audic S."/>
            <person name="Robert C."/>
            <person name="Suhre K."/>
            <person name="Drancourt M."/>
            <person name="Claverie J.-M."/>
        </authorList>
    </citation>
    <scope>NUCLEOTIDE SEQUENCE [LARGE SCALE GENOMIC DNA]</scope>
    <source>
        <strain>Twist</strain>
    </source>
</reference>
<name>GUAA_TROWT</name>
<feature type="chain" id="PRO_0000140202" description="GMP synthase [glutamine-hydrolyzing]">
    <location>
        <begin position="1"/>
        <end position="503"/>
    </location>
</feature>
<feature type="domain" description="Glutamine amidotransferase type-1" evidence="1">
    <location>
        <begin position="3"/>
        <end position="189"/>
    </location>
</feature>
<feature type="domain" description="GMPS ATP-PPase" evidence="1">
    <location>
        <begin position="190"/>
        <end position="380"/>
    </location>
</feature>
<feature type="active site" description="Nucleophile" evidence="1">
    <location>
        <position position="80"/>
    </location>
</feature>
<feature type="active site" evidence="1">
    <location>
        <position position="165"/>
    </location>
</feature>
<feature type="active site" evidence="1">
    <location>
        <position position="167"/>
    </location>
</feature>
<feature type="binding site" evidence="1">
    <location>
        <begin position="217"/>
        <end position="223"/>
    </location>
    <ligand>
        <name>ATP</name>
        <dbReference type="ChEBI" id="CHEBI:30616"/>
    </ligand>
</feature>
<evidence type="ECO:0000255" key="1">
    <source>
        <dbReference type="HAMAP-Rule" id="MF_00344"/>
    </source>
</evidence>
<proteinExistence type="inferred from homology"/>
<sequence length="503" mass="55329">MRPVLVVDFGSQYSQLVVRAIRECGYYAEFASPSISAAECLALSPIAIFLSGGPASAYKDNAPKLDEEILNCGIPVFGICYGFQLLAQAFGGSVKKANAPEYGPADITIVNKAFFSGQPDRQTVWMSHGDSVIRAPKNFCILSTSQDAVLSFCNRDRTIAGVQWHPEVKHSRFGKHTIKAFLSSFAAPNWDPEQTICGTVDSIRKTVGCKRVLCALSGGVDSVVAATLTHRAIGDRLRCVFVDHGLLRLNEREQVEEYCSSLGLNVSTYDASDCFLSALSGIRDSEQKRKVIGREFIACFSKLQERFDIKPHFLLQGTLYPDLVESGATPGGATIKSHHNVGGLSDNLGFELLEPLKYLFKDEVRKIGLQLGIPKHIVHRQPFPGPGLAIRIIGEVTNKKLSILRAADAIVRHELRDWTDIWQCPVILLSDVQSVGVRGDSRSCGFPIVIRPVSSDDAMTADWYRLPYDVLARISGRITNEIPEIVRVVLDITPKPPATIEWE</sequence>
<accession>Q83GZ6</accession>
<organism>
    <name type="scientific">Tropheryma whipplei (strain Twist)</name>
    <name type="common">Whipple's bacillus</name>
    <dbReference type="NCBI Taxonomy" id="203267"/>
    <lineage>
        <taxon>Bacteria</taxon>
        <taxon>Bacillati</taxon>
        <taxon>Actinomycetota</taxon>
        <taxon>Actinomycetes</taxon>
        <taxon>Micrococcales</taxon>
        <taxon>Tropherymataceae</taxon>
        <taxon>Tropheryma</taxon>
    </lineage>
</organism>
<dbReference type="EC" id="6.3.5.2" evidence="1"/>
<dbReference type="EMBL" id="AE014184">
    <property type="protein sequence ID" value="AAO44176.1"/>
    <property type="molecule type" value="Genomic_DNA"/>
</dbReference>
<dbReference type="RefSeq" id="WP_011102330.1">
    <property type="nucleotide sequence ID" value="NC_004572.3"/>
</dbReference>
<dbReference type="SMR" id="Q83GZ6"/>
<dbReference type="STRING" id="203267.TWT_079"/>
<dbReference type="MEROPS" id="C26.957"/>
<dbReference type="KEGG" id="twh:TWT_079"/>
<dbReference type="eggNOG" id="COG0518">
    <property type="taxonomic scope" value="Bacteria"/>
</dbReference>
<dbReference type="eggNOG" id="COG0519">
    <property type="taxonomic scope" value="Bacteria"/>
</dbReference>
<dbReference type="HOGENOM" id="CLU_014340_0_5_11"/>
<dbReference type="OrthoDB" id="9802219at2"/>
<dbReference type="UniPathway" id="UPA00189">
    <property type="reaction ID" value="UER00296"/>
</dbReference>
<dbReference type="Proteomes" id="UP000002200">
    <property type="component" value="Chromosome"/>
</dbReference>
<dbReference type="GO" id="GO:0005829">
    <property type="term" value="C:cytosol"/>
    <property type="evidence" value="ECO:0007669"/>
    <property type="project" value="TreeGrafter"/>
</dbReference>
<dbReference type="GO" id="GO:0005524">
    <property type="term" value="F:ATP binding"/>
    <property type="evidence" value="ECO:0007669"/>
    <property type="project" value="UniProtKB-UniRule"/>
</dbReference>
<dbReference type="GO" id="GO:0003921">
    <property type="term" value="F:GMP synthase activity"/>
    <property type="evidence" value="ECO:0007669"/>
    <property type="project" value="InterPro"/>
</dbReference>
<dbReference type="CDD" id="cd01742">
    <property type="entry name" value="GATase1_GMP_Synthase"/>
    <property type="match status" value="1"/>
</dbReference>
<dbReference type="CDD" id="cd01997">
    <property type="entry name" value="GMP_synthase_C"/>
    <property type="match status" value="1"/>
</dbReference>
<dbReference type="FunFam" id="3.30.300.10:FF:000002">
    <property type="entry name" value="GMP synthase [glutamine-hydrolyzing]"/>
    <property type="match status" value="1"/>
</dbReference>
<dbReference type="Gene3D" id="3.30.300.10">
    <property type="match status" value="1"/>
</dbReference>
<dbReference type="Gene3D" id="3.40.50.880">
    <property type="match status" value="1"/>
</dbReference>
<dbReference type="Gene3D" id="3.40.50.620">
    <property type="entry name" value="HUPs"/>
    <property type="match status" value="1"/>
</dbReference>
<dbReference type="HAMAP" id="MF_00344">
    <property type="entry name" value="GMP_synthase"/>
    <property type="match status" value="1"/>
</dbReference>
<dbReference type="InterPro" id="IPR029062">
    <property type="entry name" value="Class_I_gatase-like"/>
</dbReference>
<dbReference type="InterPro" id="IPR017926">
    <property type="entry name" value="GATASE"/>
</dbReference>
<dbReference type="InterPro" id="IPR001674">
    <property type="entry name" value="GMP_synth_C"/>
</dbReference>
<dbReference type="InterPro" id="IPR004739">
    <property type="entry name" value="GMP_synth_GATase"/>
</dbReference>
<dbReference type="InterPro" id="IPR022955">
    <property type="entry name" value="GMP_synthase"/>
</dbReference>
<dbReference type="InterPro" id="IPR025777">
    <property type="entry name" value="GMPS_ATP_PPase_dom"/>
</dbReference>
<dbReference type="InterPro" id="IPR022310">
    <property type="entry name" value="NAD/GMP_synthase"/>
</dbReference>
<dbReference type="InterPro" id="IPR014729">
    <property type="entry name" value="Rossmann-like_a/b/a_fold"/>
</dbReference>
<dbReference type="NCBIfam" id="TIGR00884">
    <property type="entry name" value="guaA_Cterm"/>
    <property type="match status" value="1"/>
</dbReference>
<dbReference type="NCBIfam" id="TIGR00888">
    <property type="entry name" value="guaA_Nterm"/>
    <property type="match status" value="1"/>
</dbReference>
<dbReference type="NCBIfam" id="NF000848">
    <property type="entry name" value="PRK00074.1"/>
    <property type="match status" value="1"/>
</dbReference>
<dbReference type="PANTHER" id="PTHR11922:SF2">
    <property type="entry name" value="GMP SYNTHASE [GLUTAMINE-HYDROLYZING]"/>
    <property type="match status" value="1"/>
</dbReference>
<dbReference type="PANTHER" id="PTHR11922">
    <property type="entry name" value="GMP SYNTHASE-RELATED"/>
    <property type="match status" value="1"/>
</dbReference>
<dbReference type="Pfam" id="PF00117">
    <property type="entry name" value="GATase"/>
    <property type="match status" value="1"/>
</dbReference>
<dbReference type="Pfam" id="PF00958">
    <property type="entry name" value="GMP_synt_C"/>
    <property type="match status" value="1"/>
</dbReference>
<dbReference type="Pfam" id="PF02540">
    <property type="entry name" value="NAD_synthase"/>
    <property type="match status" value="1"/>
</dbReference>
<dbReference type="PRINTS" id="PR00099">
    <property type="entry name" value="CPSGATASE"/>
</dbReference>
<dbReference type="PRINTS" id="PR00096">
    <property type="entry name" value="GATASE"/>
</dbReference>
<dbReference type="SUPFAM" id="SSF52402">
    <property type="entry name" value="Adenine nucleotide alpha hydrolases-like"/>
    <property type="match status" value="1"/>
</dbReference>
<dbReference type="SUPFAM" id="SSF52317">
    <property type="entry name" value="Class I glutamine amidotransferase-like"/>
    <property type="match status" value="1"/>
</dbReference>
<dbReference type="SUPFAM" id="SSF54810">
    <property type="entry name" value="GMP synthetase C-terminal dimerisation domain"/>
    <property type="match status" value="1"/>
</dbReference>
<dbReference type="PROSITE" id="PS51273">
    <property type="entry name" value="GATASE_TYPE_1"/>
    <property type="match status" value="1"/>
</dbReference>
<dbReference type="PROSITE" id="PS51553">
    <property type="entry name" value="GMPS_ATP_PPASE"/>
    <property type="match status" value="1"/>
</dbReference>
<gene>
    <name evidence="1" type="primary">guaA</name>
    <name type="ordered locus">TWT_079</name>
</gene>
<comment type="function">
    <text evidence="1">Catalyzes the synthesis of GMP from XMP.</text>
</comment>
<comment type="catalytic activity">
    <reaction evidence="1">
        <text>XMP + L-glutamine + ATP + H2O = GMP + L-glutamate + AMP + diphosphate + 2 H(+)</text>
        <dbReference type="Rhea" id="RHEA:11680"/>
        <dbReference type="ChEBI" id="CHEBI:15377"/>
        <dbReference type="ChEBI" id="CHEBI:15378"/>
        <dbReference type="ChEBI" id="CHEBI:29985"/>
        <dbReference type="ChEBI" id="CHEBI:30616"/>
        <dbReference type="ChEBI" id="CHEBI:33019"/>
        <dbReference type="ChEBI" id="CHEBI:57464"/>
        <dbReference type="ChEBI" id="CHEBI:58115"/>
        <dbReference type="ChEBI" id="CHEBI:58359"/>
        <dbReference type="ChEBI" id="CHEBI:456215"/>
        <dbReference type="EC" id="6.3.5.2"/>
    </reaction>
</comment>
<comment type="pathway">
    <text evidence="1">Purine metabolism; GMP biosynthesis; GMP from XMP (L-Gln route): step 1/1.</text>
</comment>
<comment type="subunit">
    <text evidence="1">Homodimer.</text>
</comment>